<dbReference type="EC" id="2.5.1.157" evidence="2"/>
<dbReference type="EMBL" id="CP000300">
    <property type="protein sequence ID" value="ABE51107.1"/>
    <property type="molecule type" value="Genomic_DNA"/>
</dbReference>
<dbReference type="RefSeq" id="WP_011498271.1">
    <property type="nucleotide sequence ID" value="NC_007955.1"/>
</dbReference>
<dbReference type="SMR" id="Q12ZL9"/>
<dbReference type="STRING" id="259564.Mbur_0088"/>
<dbReference type="GeneID" id="3996774"/>
<dbReference type="KEGG" id="mbu:Mbur_0088"/>
<dbReference type="HOGENOM" id="CLU_035060_4_1_2"/>
<dbReference type="OrthoDB" id="7441at2157"/>
<dbReference type="Proteomes" id="UP000001979">
    <property type="component" value="Chromosome"/>
</dbReference>
<dbReference type="GO" id="GO:0005737">
    <property type="term" value="C:cytoplasm"/>
    <property type="evidence" value="ECO:0007669"/>
    <property type="project" value="UniProtKB-SubCell"/>
</dbReference>
<dbReference type="GO" id="GO:0106388">
    <property type="term" value="F:18S rRNA aminocarboxypropyltransferase activity"/>
    <property type="evidence" value="ECO:0007669"/>
    <property type="project" value="InterPro"/>
</dbReference>
<dbReference type="GO" id="GO:1904047">
    <property type="term" value="F:S-adenosyl-L-methionine binding"/>
    <property type="evidence" value="ECO:0007669"/>
    <property type="project" value="UniProtKB-UniRule"/>
</dbReference>
<dbReference type="GO" id="GO:0000455">
    <property type="term" value="P:enzyme-directed rRNA pseudouridine synthesis"/>
    <property type="evidence" value="ECO:0007669"/>
    <property type="project" value="UniProtKB-UniRule"/>
</dbReference>
<dbReference type="HAMAP" id="MF_01116">
    <property type="entry name" value="TSR3"/>
    <property type="match status" value="1"/>
</dbReference>
<dbReference type="InterPro" id="IPR007209">
    <property type="entry name" value="RNaseL-inhib-like_metal-bd_dom"/>
</dbReference>
<dbReference type="InterPro" id="IPR022968">
    <property type="entry name" value="Tsr3-like"/>
</dbReference>
<dbReference type="InterPro" id="IPR007177">
    <property type="entry name" value="Tsr3_C"/>
</dbReference>
<dbReference type="NCBIfam" id="NF002621">
    <property type="entry name" value="PRK02287.1"/>
    <property type="match status" value="1"/>
</dbReference>
<dbReference type="PANTHER" id="PTHR20426:SF0">
    <property type="entry name" value="18S RRNA AMINOCARBOXYPROPYLTRANSFERASE"/>
    <property type="match status" value="1"/>
</dbReference>
<dbReference type="PANTHER" id="PTHR20426">
    <property type="entry name" value="RIBOSOME BIOGENESIS PROTEIN TSR3 HOMOLOG"/>
    <property type="match status" value="1"/>
</dbReference>
<dbReference type="Pfam" id="PF04068">
    <property type="entry name" value="Fer4_RLI"/>
    <property type="match status" value="1"/>
</dbReference>
<dbReference type="Pfam" id="PF04034">
    <property type="entry name" value="Ribo_biogen_C"/>
    <property type="match status" value="1"/>
</dbReference>
<feature type="chain" id="PRO_1000065240" description="16S rRNA aminocarboxypropyltransferase">
    <location>
        <begin position="1"/>
        <end position="173"/>
    </location>
</feature>
<feature type="binding site" evidence="1 2">
    <location>
        <position position="25"/>
    </location>
    <ligand>
        <name>S-adenosyl-L-methionine</name>
        <dbReference type="ChEBI" id="CHEBI:59789"/>
    </ligand>
</feature>
<feature type="binding site" evidence="2">
    <location>
        <position position="72"/>
    </location>
    <ligand>
        <name>S-adenosyl-L-methionine</name>
        <dbReference type="ChEBI" id="CHEBI:59789"/>
    </ligand>
</feature>
<feature type="binding site" evidence="1 2">
    <location>
        <position position="96"/>
    </location>
    <ligand>
        <name>S-adenosyl-L-methionine</name>
        <dbReference type="ChEBI" id="CHEBI:59789"/>
    </ligand>
</feature>
<feature type="binding site" evidence="2">
    <location>
        <position position="115"/>
    </location>
    <ligand>
        <name>S-adenosyl-L-methionine</name>
        <dbReference type="ChEBI" id="CHEBI:59789"/>
    </ligand>
</feature>
<comment type="function">
    <text evidence="2">Aminocarboxypropyltransferase that catalyzes the aminocarboxypropyl transfer on pseudouridine corresponding to position 914 in M.jannaschii 16S rRNA. It constitutes the last step in biosynthesis of the hypermodified N1-methyl-N3-(3-amino-3-carboxypropyl) pseudouridine (m1acp3-Psi).</text>
</comment>
<comment type="catalytic activity">
    <reaction evidence="2">
        <text>an N(1)-methylpseudouridine in rRNA + S-adenosyl-L-methionine = N(1)-methyl-N(3)-[(3S)-3-amino-3-carboxypropyl]pseudouridine in rRNA + S-methyl-5'-thioadenosine + H(+)</text>
        <dbReference type="Rhea" id="RHEA:63296"/>
        <dbReference type="Rhea" id="RHEA-COMP:11634"/>
        <dbReference type="Rhea" id="RHEA-COMP:16310"/>
        <dbReference type="ChEBI" id="CHEBI:15378"/>
        <dbReference type="ChEBI" id="CHEBI:17509"/>
        <dbReference type="ChEBI" id="CHEBI:59789"/>
        <dbReference type="ChEBI" id="CHEBI:74890"/>
        <dbReference type="ChEBI" id="CHEBI:146234"/>
        <dbReference type="EC" id="2.5.1.157"/>
    </reaction>
</comment>
<comment type="subcellular location">
    <subcellularLocation>
        <location evidence="2">Cytoplasm</location>
    </subcellularLocation>
</comment>
<comment type="similarity">
    <text evidence="2">Belongs to the TDD superfamily. TSR3 family.</text>
</comment>
<organism>
    <name type="scientific">Methanococcoides burtonii (strain DSM 6242 / NBRC 107633 / OCM 468 / ACE-M)</name>
    <dbReference type="NCBI Taxonomy" id="259564"/>
    <lineage>
        <taxon>Archaea</taxon>
        <taxon>Methanobacteriati</taxon>
        <taxon>Methanobacteriota</taxon>
        <taxon>Stenosarchaea group</taxon>
        <taxon>Methanomicrobia</taxon>
        <taxon>Methanosarcinales</taxon>
        <taxon>Methanosarcinaceae</taxon>
        <taxon>Methanococcoides</taxon>
    </lineage>
</organism>
<proteinExistence type="inferred from homology"/>
<name>TSR3_METBU</name>
<keyword id="KW-0963">Cytoplasm</keyword>
<keyword id="KW-0690">Ribosome biogenesis</keyword>
<keyword id="KW-0698">rRNA processing</keyword>
<keyword id="KW-0949">S-adenosyl-L-methionine</keyword>
<keyword id="KW-0808">Transferase</keyword>
<accession>Q12ZL9</accession>
<protein>
    <recommendedName>
        <fullName evidence="2 3">16S rRNA aminocarboxypropyltransferase</fullName>
        <ecNumber evidence="2">2.5.1.157</ecNumber>
    </recommendedName>
</protein>
<evidence type="ECO:0000250" key="1">
    <source>
        <dbReference type="UniProtKB" id="E1QU22"/>
    </source>
</evidence>
<evidence type="ECO:0000255" key="2">
    <source>
        <dbReference type="HAMAP-Rule" id="MF_01116"/>
    </source>
</evidence>
<evidence type="ECO:0000305" key="3"/>
<gene>
    <name type="ordered locus">Mbur_0088</name>
</gene>
<reference key="1">
    <citation type="journal article" date="2009" name="ISME J.">
        <title>The genome sequence of the psychrophilic archaeon, Methanococcoides burtonii: the role of genome evolution in cold adaptation.</title>
        <authorList>
            <person name="Allen M.A."/>
            <person name="Lauro F.M."/>
            <person name="Williams T.J."/>
            <person name="Burg D."/>
            <person name="Siddiqui K.S."/>
            <person name="De Francisci D."/>
            <person name="Chong K.W."/>
            <person name="Pilak O."/>
            <person name="Chew H.H."/>
            <person name="De Maere M.Z."/>
            <person name="Ting L."/>
            <person name="Katrib M."/>
            <person name="Ng C."/>
            <person name="Sowers K.R."/>
            <person name="Galperin M.Y."/>
            <person name="Anderson I.J."/>
            <person name="Ivanova N."/>
            <person name="Dalin E."/>
            <person name="Martinez M."/>
            <person name="Lapidus A."/>
            <person name="Hauser L."/>
            <person name="Land M."/>
            <person name="Thomas T."/>
            <person name="Cavicchioli R."/>
        </authorList>
    </citation>
    <scope>NUCLEOTIDE SEQUENCE [LARGE SCALE GENOMIC DNA]</scope>
    <source>
        <strain>DSM 6242 / NBRC 107633 / OCM 468 / ACE-M</strain>
    </source>
</reference>
<sequence length="173" mass="20066">MKKQIDKDYHLHIFHAKQCDPKKCTGKKMARFELARIFDKVQKIPRGSILLDPMAKQALSPADKHEQNITVLDCSWETVEEVFPHLMRLHLQHRALPYLVATNPVNFGRPFKLTSVEAFAAALYILGNKKQAEKILSKFNWGHVFLDMNKEPLEDYSKAKDSNEIIKIQSEYM</sequence>